<dbReference type="EC" id="3.6.-.-" evidence="1"/>
<dbReference type="EMBL" id="CP000539">
    <property type="protein sequence ID" value="ABM44239.1"/>
    <property type="status" value="ALT_INIT"/>
    <property type="molecule type" value="Genomic_DNA"/>
</dbReference>
<dbReference type="SMR" id="A1WDB4"/>
<dbReference type="STRING" id="232721.Ajs_4138"/>
<dbReference type="KEGG" id="ajs:Ajs_4138"/>
<dbReference type="eggNOG" id="COG0486">
    <property type="taxonomic scope" value="Bacteria"/>
</dbReference>
<dbReference type="HOGENOM" id="CLU_019624_4_1_4"/>
<dbReference type="Proteomes" id="UP000000645">
    <property type="component" value="Chromosome"/>
</dbReference>
<dbReference type="GO" id="GO:0005829">
    <property type="term" value="C:cytosol"/>
    <property type="evidence" value="ECO:0007669"/>
    <property type="project" value="TreeGrafter"/>
</dbReference>
<dbReference type="GO" id="GO:0005525">
    <property type="term" value="F:GTP binding"/>
    <property type="evidence" value="ECO:0007669"/>
    <property type="project" value="UniProtKB-UniRule"/>
</dbReference>
<dbReference type="GO" id="GO:0003924">
    <property type="term" value="F:GTPase activity"/>
    <property type="evidence" value="ECO:0007669"/>
    <property type="project" value="UniProtKB-UniRule"/>
</dbReference>
<dbReference type="GO" id="GO:0046872">
    <property type="term" value="F:metal ion binding"/>
    <property type="evidence" value="ECO:0007669"/>
    <property type="project" value="UniProtKB-KW"/>
</dbReference>
<dbReference type="GO" id="GO:0030488">
    <property type="term" value="P:tRNA methylation"/>
    <property type="evidence" value="ECO:0007669"/>
    <property type="project" value="TreeGrafter"/>
</dbReference>
<dbReference type="GO" id="GO:0002098">
    <property type="term" value="P:tRNA wobble uridine modification"/>
    <property type="evidence" value="ECO:0007669"/>
    <property type="project" value="TreeGrafter"/>
</dbReference>
<dbReference type="CDD" id="cd04164">
    <property type="entry name" value="trmE"/>
    <property type="match status" value="1"/>
</dbReference>
<dbReference type="CDD" id="cd14858">
    <property type="entry name" value="TrmE_N"/>
    <property type="match status" value="1"/>
</dbReference>
<dbReference type="Gene3D" id="3.40.50.300">
    <property type="entry name" value="P-loop containing nucleotide triphosphate hydrolases"/>
    <property type="match status" value="1"/>
</dbReference>
<dbReference type="Gene3D" id="3.30.1360.120">
    <property type="entry name" value="Probable tRNA modification gtpase trme, domain 1"/>
    <property type="match status" value="1"/>
</dbReference>
<dbReference type="Gene3D" id="1.20.120.430">
    <property type="entry name" value="tRNA modification GTPase MnmE domain 2"/>
    <property type="match status" value="1"/>
</dbReference>
<dbReference type="HAMAP" id="MF_00379">
    <property type="entry name" value="GTPase_MnmE"/>
    <property type="match status" value="1"/>
</dbReference>
<dbReference type="InterPro" id="IPR031168">
    <property type="entry name" value="G_TrmE"/>
</dbReference>
<dbReference type="InterPro" id="IPR006073">
    <property type="entry name" value="GTP-bd"/>
</dbReference>
<dbReference type="InterPro" id="IPR018948">
    <property type="entry name" value="GTP-bd_TrmE_N"/>
</dbReference>
<dbReference type="InterPro" id="IPR004520">
    <property type="entry name" value="GTPase_MnmE"/>
</dbReference>
<dbReference type="InterPro" id="IPR027368">
    <property type="entry name" value="MnmE_dom2"/>
</dbReference>
<dbReference type="InterPro" id="IPR025867">
    <property type="entry name" value="MnmE_helical"/>
</dbReference>
<dbReference type="InterPro" id="IPR027417">
    <property type="entry name" value="P-loop_NTPase"/>
</dbReference>
<dbReference type="InterPro" id="IPR005225">
    <property type="entry name" value="Small_GTP-bd"/>
</dbReference>
<dbReference type="InterPro" id="IPR027266">
    <property type="entry name" value="TrmE/GcvT_dom1"/>
</dbReference>
<dbReference type="NCBIfam" id="TIGR00450">
    <property type="entry name" value="mnmE_trmE_thdF"/>
    <property type="match status" value="1"/>
</dbReference>
<dbReference type="NCBIfam" id="NF003661">
    <property type="entry name" value="PRK05291.1-3"/>
    <property type="match status" value="1"/>
</dbReference>
<dbReference type="NCBIfam" id="TIGR00231">
    <property type="entry name" value="small_GTP"/>
    <property type="match status" value="1"/>
</dbReference>
<dbReference type="PANTHER" id="PTHR42714">
    <property type="entry name" value="TRNA MODIFICATION GTPASE GTPBP3"/>
    <property type="match status" value="1"/>
</dbReference>
<dbReference type="PANTHER" id="PTHR42714:SF2">
    <property type="entry name" value="TRNA MODIFICATION GTPASE GTPBP3, MITOCHONDRIAL"/>
    <property type="match status" value="1"/>
</dbReference>
<dbReference type="Pfam" id="PF01926">
    <property type="entry name" value="MMR_HSR1"/>
    <property type="match status" value="1"/>
</dbReference>
<dbReference type="Pfam" id="PF12631">
    <property type="entry name" value="MnmE_helical"/>
    <property type="match status" value="1"/>
</dbReference>
<dbReference type="Pfam" id="PF10396">
    <property type="entry name" value="TrmE_N"/>
    <property type="match status" value="1"/>
</dbReference>
<dbReference type="SUPFAM" id="SSF52540">
    <property type="entry name" value="P-loop containing nucleoside triphosphate hydrolases"/>
    <property type="match status" value="1"/>
</dbReference>
<dbReference type="SUPFAM" id="SSF116878">
    <property type="entry name" value="TrmE connector domain"/>
    <property type="match status" value="1"/>
</dbReference>
<dbReference type="PROSITE" id="PS51709">
    <property type="entry name" value="G_TRME"/>
    <property type="match status" value="1"/>
</dbReference>
<sequence length="466" mass="49627">MLPRHSDPIVAIATAPGRGAVGIVRVSGKQIGALVQALCGRALKPREATYLPFRDAAGQAIDQGLALYFPAPHSYTGEDVLELQAHGGPVVLQLLLARCLEAAQGLLPRLRLAEPGEFTERAFLNDKIDLAQAEAIADLIDASTEAAARGASRSLSGDFSREIHTLRDALVHLRMLVEATLDFPEEEIDFLRKADASGQLSNLKRSLARVMQRASQGALLREGIKVVIAGQPNAGKSSLLNALAGAELAIVTPIAGTTRDKVQQTIQIEGVPLHVIDTAGLRESDDEVERIGIARAWDEIAGADAVLFLHDLTRWGSAQYQDDDAAIAHTLSNRLPAGVPVVDVWNKADAAPQAAAPAREGESQAVLLSARTGQGLDTLRRQLLQIAGWQSAAEGVYIARARHIEALRAVDAHLMEAAAQLESDGPALDLLAEELRLAQNALNTITGEFTSDDLLGVIFSSFCIGK</sequence>
<protein>
    <recommendedName>
        <fullName evidence="1">tRNA modification GTPase MnmE</fullName>
        <ecNumber evidence="1">3.6.-.-</ecNumber>
    </recommendedName>
</protein>
<keyword id="KW-0963">Cytoplasm</keyword>
<keyword id="KW-0342">GTP-binding</keyword>
<keyword id="KW-0378">Hydrolase</keyword>
<keyword id="KW-0460">Magnesium</keyword>
<keyword id="KW-0479">Metal-binding</keyword>
<keyword id="KW-0547">Nucleotide-binding</keyword>
<keyword id="KW-0630">Potassium</keyword>
<keyword id="KW-0819">tRNA processing</keyword>
<organism>
    <name type="scientific">Acidovorax sp. (strain JS42)</name>
    <dbReference type="NCBI Taxonomy" id="232721"/>
    <lineage>
        <taxon>Bacteria</taxon>
        <taxon>Pseudomonadati</taxon>
        <taxon>Pseudomonadota</taxon>
        <taxon>Betaproteobacteria</taxon>
        <taxon>Burkholderiales</taxon>
        <taxon>Comamonadaceae</taxon>
        <taxon>Acidovorax</taxon>
    </lineage>
</organism>
<gene>
    <name evidence="1" type="primary">mnmE</name>
    <name evidence="1" type="synonym">trmE</name>
    <name type="ordered locus">Ajs_4138</name>
</gene>
<comment type="function">
    <text evidence="1">Exhibits a very high intrinsic GTPase hydrolysis rate. Involved in the addition of a carboxymethylaminomethyl (cmnm) group at the wobble position (U34) of certain tRNAs, forming tRNA-cmnm(5)s(2)U34.</text>
</comment>
<comment type="cofactor">
    <cofactor evidence="1">
        <name>K(+)</name>
        <dbReference type="ChEBI" id="CHEBI:29103"/>
    </cofactor>
    <text evidence="1">Binds 1 potassium ion per subunit.</text>
</comment>
<comment type="subunit">
    <text evidence="1">Homodimer. Heterotetramer of two MnmE and two MnmG subunits.</text>
</comment>
<comment type="subcellular location">
    <subcellularLocation>
        <location evidence="1">Cytoplasm</location>
    </subcellularLocation>
</comment>
<comment type="similarity">
    <text evidence="1">Belongs to the TRAFAC class TrmE-Era-EngA-EngB-Septin-like GTPase superfamily. TrmE GTPase family.</text>
</comment>
<comment type="sequence caution" evidence="2">
    <conflict type="erroneous initiation">
        <sequence resource="EMBL-CDS" id="ABM44239"/>
    </conflict>
</comment>
<proteinExistence type="inferred from homology"/>
<evidence type="ECO:0000255" key="1">
    <source>
        <dbReference type="HAMAP-Rule" id="MF_00379"/>
    </source>
</evidence>
<evidence type="ECO:0000305" key="2"/>
<feature type="chain" id="PRO_0000345696" description="tRNA modification GTPase MnmE">
    <location>
        <begin position="1"/>
        <end position="466"/>
    </location>
</feature>
<feature type="domain" description="TrmE-type G">
    <location>
        <begin position="223"/>
        <end position="388"/>
    </location>
</feature>
<feature type="binding site" evidence="1">
    <location>
        <position position="25"/>
    </location>
    <ligand>
        <name>(6S)-5-formyl-5,6,7,8-tetrahydrofolate</name>
        <dbReference type="ChEBI" id="CHEBI:57457"/>
    </ligand>
</feature>
<feature type="binding site" evidence="1">
    <location>
        <position position="82"/>
    </location>
    <ligand>
        <name>(6S)-5-formyl-5,6,7,8-tetrahydrofolate</name>
        <dbReference type="ChEBI" id="CHEBI:57457"/>
    </ligand>
</feature>
<feature type="binding site" evidence="1">
    <location>
        <position position="127"/>
    </location>
    <ligand>
        <name>(6S)-5-formyl-5,6,7,8-tetrahydrofolate</name>
        <dbReference type="ChEBI" id="CHEBI:57457"/>
    </ligand>
</feature>
<feature type="binding site" evidence="1">
    <location>
        <begin position="233"/>
        <end position="238"/>
    </location>
    <ligand>
        <name>GTP</name>
        <dbReference type="ChEBI" id="CHEBI:37565"/>
    </ligand>
</feature>
<feature type="binding site" evidence="1">
    <location>
        <position position="233"/>
    </location>
    <ligand>
        <name>K(+)</name>
        <dbReference type="ChEBI" id="CHEBI:29103"/>
    </ligand>
</feature>
<feature type="binding site" evidence="1">
    <location>
        <position position="237"/>
    </location>
    <ligand>
        <name>Mg(2+)</name>
        <dbReference type="ChEBI" id="CHEBI:18420"/>
    </ligand>
</feature>
<feature type="binding site" evidence="1">
    <location>
        <begin position="252"/>
        <end position="258"/>
    </location>
    <ligand>
        <name>GTP</name>
        <dbReference type="ChEBI" id="CHEBI:37565"/>
    </ligand>
</feature>
<feature type="binding site" evidence="1">
    <location>
        <position position="252"/>
    </location>
    <ligand>
        <name>K(+)</name>
        <dbReference type="ChEBI" id="CHEBI:29103"/>
    </ligand>
</feature>
<feature type="binding site" evidence="1">
    <location>
        <position position="254"/>
    </location>
    <ligand>
        <name>K(+)</name>
        <dbReference type="ChEBI" id="CHEBI:29103"/>
    </ligand>
</feature>
<feature type="binding site" evidence="1">
    <location>
        <position position="257"/>
    </location>
    <ligand>
        <name>K(+)</name>
        <dbReference type="ChEBI" id="CHEBI:29103"/>
    </ligand>
</feature>
<feature type="binding site" evidence="1">
    <location>
        <position position="258"/>
    </location>
    <ligand>
        <name>Mg(2+)</name>
        <dbReference type="ChEBI" id="CHEBI:18420"/>
    </ligand>
</feature>
<feature type="binding site" evidence="1">
    <location>
        <begin position="277"/>
        <end position="280"/>
    </location>
    <ligand>
        <name>GTP</name>
        <dbReference type="ChEBI" id="CHEBI:37565"/>
    </ligand>
</feature>
<feature type="binding site" evidence="1">
    <location>
        <begin position="346"/>
        <end position="349"/>
    </location>
    <ligand>
        <name>GTP</name>
        <dbReference type="ChEBI" id="CHEBI:37565"/>
    </ligand>
</feature>
<feature type="binding site" evidence="1">
    <location>
        <begin position="369"/>
        <end position="371"/>
    </location>
    <ligand>
        <name>GTP</name>
        <dbReference type="ChEBI" id="CHEBI:37565"/>
    </ligand>
</feature>
<feature type="binding site" evidence="1">
    <location>
        <position position="466"/>
    </location>
    <ligand>
        <name>(6S)-5-formyl-5,6,7,8-tetrahydrofolate</name>
        <dbReference type="ChEBI" id="CHEBI:57457"/>
    </ligand>
</feature>
<accession>A1WDB4</accession>
<reference key="1">
    <citation type="submission" date="2006-12" db="EMBL/GenBank/DDBJ databases">
        <title>Complete sequence of chromosome 1 of Acidovorax sp. JS42.</title>
        <authorList>
            <person name="Copeland A."/>
            <person name="Lucas S."/>
            <person name="Lapidus A."/>
            <person name="Barry K."/>
            <person name="Detter J.C."/>
            <person name="Glavina del Rio T."/>
            <person name="Dalin E."/>
            <person name="Tice H."/>
            <person name="Pitluck S."/>
            <person name="Chertkov O."/>
            <person name="Brettin T."/>
            <person name="Bruce D."/>
            <person name="Han C."/>
            <person name="Tapia R."/>
            <person name="Gilna P."/>
            <person name="Schmutz J."/>
            <person name="Larimer F."/>
            <person name="Land M."/>
            <person name="Hauser L."/>
            <person name="Kyrpides N."/>
            <person name="Kim E."/>
            <person name="Stahl D."/>
            <person name="Richardson P."/>
        </authorList>
    </citation>
    <scope>NUCLEOTIDE SEQUENCE [LARGE SCALE GENOMIC DNA]</scope>
    <source>
        <strain>JS42</strain>
    </source>
</reference>
<name>MNME_ACISJ</name>